<evidence type="ECO:0000250" key="1">
    <source>
        <dbReference type="UniProtKB" id="P04517"/>
    </source>
</evidence>
<evidence type="ECO:0000250" key="2">
    <source>
        <dbReference type="UniProtKB" id="P09814"/>
    </source>
</evidence>
<evidence type="ECO:0000250" key="3">
    <source>
        <dbReference type="UniProtKB" id="P13529"/>
    </source>
</evidence>
<evidence type="ECO:0000250" key="4">
    <source>
        <dbReference type="UniProtKB" id="P18247"/>
    </source>
</evidence>
<evidence type="ECO:0000255" key="5"/>
<evidence type="ECO:0000255" key="6">
    <source>
        <dbReference type="PROSITE-ProRule" id="PRU00539"/>
    </source>
</evidence>
<evidence type="ECO:0000255" key="7">
    <source>
        <dbReference type="PROSITE-ProRule" id="PRU00541"/>
    </source>
</evidence>
<evidence type="ECO:0000255" key="8">
    <source>
        <dbReference type="PROSITE-ProRule" id="PRU00542"/>
    </source>
</evidence>
<evidence type="ECO:0000255" key="9">
    <source>
        <dbReference type="PROSITE-ProRule" id="PRU00766"/>
    </source>
</evidence>
<evidence type="ECO:0000256" key="10">
    <source>
        <dbReference type="SAM" id="MobiDB-lite"/>
    </source>
</evidence>
<evidence type="ECO:0000305" key="11"/>
<dbReference type="EC" id="3.6.4.-"/>
<dbReference type="EC" id="3.4.22.44"/>
<dbReference type="EC" id="2.7.7.48"/>
<dbReference type="EMBL" id="X69757">
    <property type="protein sequence ID" value="CAA49412.1"/>
    <property type="molecule type" value="Genomic_RNA"/>
</dbReference>
<dbReference type="PIR" id="JQ1537">
    <property type="entry name" value="JQ1537"/>
</dbReference>
<dbReference type="SMR" id="Q04574"/>
<dbReference type="Proteomes" id="UP000007446">
    <property type="component" value="Genome"/>
</dbReference>
<dbReference type="GO" id="GO:0019029">
    <property type="term" value="C:helical viral capsid"/>
    <property type="evidence" value="ECO:0007669"/>
    <property type="project" value="UniProtKB-KW"/>
</dbReference>
<dbReference type="GO" id="GO:0044161">
    <property type="term" value="C:host cell cytoplasmic vesicle"/>
    <property type="evidence" value="ECO:0007669"/>
    <property type="project" value="UniProtKB-SubCell"/>
</dbReference>
<dbReference type="GO" id="GO:0005524">
    <property type="term" value="F:ATP binding"/>
    <property type="evidence" value="ECO:0007669"/>
    <property type="project" value="UniProtKB-KW"/>
</dbReference>
<dbReference type="GO" id="GO:0008234">
    <property type="term" value="F:cysteine-type peptidase activity"/>
    <property type="evidence" value="ECO:0007669"/>
    <property type="project" value="InterPro"/>
</dbReference>
<dbReference type="GO" id="GO:0004386">
    <property type="term" value="F:helicase activity"/>
    <property type="evidence" value="ECO:0007669"/>
    <property type="project" value="UniProtKB-KW"/>
</dbReference>
<dbReference type="GO" id="GO:0016818">
    <property type="term" value="F:hydrolase activity, acting on acid anhydrides, in phosphorus-containing anhydrides"/>
    <property type="evidence" value="ECO:0007669"/>
    <property type="project" value="InterPro"/>
</dbReference>
<dbReference type="GO" id="GO:0003723">
    <property type="term" value="F:RNA binding"/>
    <property type="evidence" value="ECO:0007669"/>
    <property type="project" value="InterPro"/>
</dbReference>
<dbReference type="GO" id="GO:0003968">
    <property type="term" value="F:RNA-directed RNA polymerase activity"/>
    <property type="evidence" value="ECO:0007669"/>
    <property type="project" value="UniProtKB-KW"/>
</dbReference>
<dbReference type="GO" id="GO:0005198">
    <property type="term" value="F:structural molecule activity"/>
    <property type="evidence" value="ECO:0007669"/>
    <property type="project" value="InterPro"/>
</dbReference>
<dbReference type="GO" id="GO:0006351">
    <property type="term" value="P:DNA-templated transcription"/>
    <property type="evidence" value="ECO:0007669"/>
    <property type="project" value="InterPro"/>
</dbReference>
<dbReference type="GO" id="GO:0006508">
    <property type="term" value="P:proteolysis"/>
    <property type="evidence" value="ECO:0007669"/>
    <property type="project" value="InterPro"/>
</dbReference>
<dbReference type="GO" id="GO:0039694">
    <property type="term" value="P:viral RNA genome replication"/>
    <property type="evidence" value="ECO:0007669"/>
    <property type="project" value="InterPro"/>
</dbReference>
<dbReference type="CDD" id="cd23175">
    <property type="entry name" value="ps-ssRNAv_Potyviridae_RdRp"/>
    <property type="match status" value="1"/>
</dbReference>
<dbReference type="Gene3D" id="3.30.70.270">
    <property type="match status" value="1"/>
</dbReference>
<dbReference type="Gene3D" id="3.40.50.300">
    <property type="entry name" value="P-loop containing nucleotide triphosphate hydrolases"/>
    <property type="match status" value="2"/>
</dbReference>
<dbReference type="Gene3D" id="2.40.10.10">
    <property type="entry name" value="Trypsin-like serine proteases"/>
    <property type="match status" value="1"/>
</dbReference>
<dbReference type="InterPro" id="IPR011545">
    <property type="entry name" value="DEAD/DEAH_box_helicase_dom"/>
</dbReference>
<dbReference type="InterPro" id="IPR043502">
    <property type="entry name" value="DNA/RNA_pol_sf"/>
</dbReference>
<dbReference type="InterPro" id="IPR014001">
    <property type="entry name" value="Helicase_ATP-bd"/>
</dbReference>
<dbReference type="InterPro" id="IPR001650">
    <property type="entry name" value="Helicase_C-like"/>
</dbReference>
<dbReference type="InterPro" id="IPR027417">
    <property type="entry name" value="P-loop_NTPase"/>
</dbReference>
<dbReference type="InterPro" id="IPR009003">
    <property type="entry name" value="Peptidase_S1_PA"/>
</dbReference>
<dbReference type="InterPro" id="IPR043504">
    <property type="entry name" value="Peptidase_S1_PA_chymotrypsin"/>
</dbReference>
<dbReference type="InterPro" id="IPR001592">
    <property type="entry name" value="Poty_coat"/>
</dbReference>
<dbReference type="InterPro" id="IPR001730">
    <property type="entry name" value="Potyv_NIa-pro_dom"/>
</dbReference>
<dbReference type="InterPro" id="IPR013648">
    <property type="entry name" value="PP_Potyviridae"/>
</dbReference>
<dbReference type="InterPro" id="IPR043128">
    <property type="entry name" value="Rev_trsase/Diguanyl_cyclase"/>
</dbReference>
<dbReference type="InterPro" id="IPR001205">
    <property type="entry name" value="RNA-dir_pol_C"/>
</dbReference>
<dbReference type="InterPro" id="IPR007094">
    <property type="entry name" value="RNA-dir_pol_PSvirus"/>
</dbReference>
<dbReference type="PANTHER" id="PTHR43519">
    <property type="entry name" value="ATP-DEPENDENT RNA HELICASE HRPB"/>
    <property type="match status" value="1"/>
</dbReference>
<dbReference type="PANTHER" id="PTHR43519:SF1">
    <property type="entry name" value="ATP-DEPENDENT RNA HELICASE HRPB"/>
    <property type="match status" value="1"/>
</dbReference>
<dbReference type="Pfam" id="PF00270">
    <property type="entry name" value="DEAD"/>
    <property type="match status" value="1"/>
</dbReference>
<dbReference type="Pfam" id="PF00863">
    <property type="entry name" value="Peptidase_C4"/>
    <property type="match status" value="1"/>
</dbReference>
<dbReference type="Pfam" id="PF00767">
    <property type="entry name" value="Poty_coat"/>
    <property type="match status" value="1"/>
</dbReference>
<dbReference type="Pfam" id="PF08440">
    <property type="entry name" value="Poty_PP"/>
    <property type="match status" value="1"/>
</dbReference>
<dbReference type="Pfam" id="PF00680">
    <property type="entry name" value="RdRP_1"/>
    <property type="match status" value="1"/>
</dbReference>
<dbReference type="PRINTS" id="PR00966">
    <property type="entry name" value="NIAPOTYPTASE"/>
</dbReference>
<dbReference type="SMART" id="SM00487">
    <property type="entry name" value="DEXDc"/>
    <property type="match status" value="1"/>
</dbReference>
<dbReference type="SMART" id="SM00490">
    <property type="entry name" value="HELICc"/>
    <property type="match status" value="1"/>
</dbReference>
<dbReference type="SUPFAM" id="SSF56672">
    <property type="entry name" value="DNA/RNA polymerases"/>
    <property type="match status" value="1"/>
</dbReference>
<dbReference type="SUPFAM" id="SSF52540">
    <property type="entry name" value="P-loop containing nucleoside triphosphate hydrolases"/>
    <property type="match status" value="2"/>
</dbReference>
<dbReference type="SUPFAM" id="SSF50494">
    <property type="entry name" value="Trypsin-like serine proteases"/>
    <property type="match status" value="1"/>
</dbReference>
<dbReference type="PROSITE" id="PS51192">
    <property type="entry name" value="HELICASE_ATP_BIND_1"/>
    <property type="match status" value="1"/>
</dbReference>
<dbReference type="PROSITE" id="PS51194">
    <property type="entry name" value="HELICASE_CTER"/>
    <property type="match status" value="1"/>
</dbReference>
<dbReference type="PROSITE" id="PS51436">
    <property type="entry name" value="POTYVIRUS_NIA_PRO"/>
    <property type="match status" value="1"/>
</dbReference>
<dbReference type="PROSITE" id="PS50507">
    <property type="entry name" value="RDRP_SSRNA_POS"/>
    <property type="match status" value="1"/>
</dbReference>
<organismHost>
    <name type="scientific">Hordeum vulgare</name>
    <name type="common">Barley</name>
    <dbReference type="NCBI Taxonomy" id="4513"/>
</organismHost>
<sequence length="2412" mass="270876">MEQTLAQAVSRRGKTNTPMAEERKPFSPMNFSANFVAPELFYSANVRKIKNIFRERSTTRFLDAISSDFELVAFLTLSPAHLMQLETTLRQEIRSCVVPIVTSDASFETVAVIKTALDGMRFHFGHTTLEKGWMSMMRHAESCLQESSSSAVNDLQMQIKRVGSLLLSGKNRVESCELSVLNLTARRFRIEYGLNGTYFGEHVAMLLDLKRYIYGTVPKEFCWAKTKKHSLFTTPKWIKRTPIDCFLFCLRVIPILHRFGVAISLLYWSCVAALNFPAFMAFLFKRQFAKYLAHSFAKHSIYFIFLTIIAILWSFRTFASQKPKIVLQARSTAEKEKKLMMILASVVGITYLFDYDIAEALGNCLHKISRLSSYLLDDHQGIASRMFGASYGLQAGDSAEDAVTTIISDLLSVTFKIVDEDASQGTVEDASETTFHSWVGVNTLAGRNMSRPLQYDVNKTYALTPQNVQLQARAMADANNCWSMVVGHTGSGKSTYLPVQYSNYLSTKSDRRQQILICEPTQAATENVCAGVAANLGRAVYGRHEGWSRMGDHCIQVMTYGSALQCHAMDPSFISTFDAIFLDEAHDVKEHSLVFESICDTFKSVRKFYVSATPRDGSVCPEAARKYPLHVETSVCDSYRKFIAAQGGGDLLDISKHDTALVFLAGRPECIKAANAWNASVTGEKRAFPLSSDNFATDFSMLTERLKTHKTIIFTTNIIETGVTLSVDCVVDFGHTMRPCLDLNQKSLRLDRRRVTRNERQQRIGRAGRLKDGYAIVCGDVDRAVNVISPDVLYGAALLSFKHNVPFYMNETFESSWLEGVTKAQADTMTIFKLPIFLTRDLINADGSVAREFLDVLKKHQFTTSDIKQAPSVTAKHIFPTWASYFSLHQALHYGDDKDEIPHELRYARVPFSVTTLSKFDWPALALACEKHRASMSNVFAGIEEPARVVTLQTNPANIQASITHLTHMSKNYKTLIENNQHVRQSMMTNVMFKWFSSTRITKDLDRNLRRCTDNLSVVEATLSSLRQILAGNTQVHATPHMQSTLEDIIELQASDTLTEESLANALGIFVPKCNLFLLLATKGFKLVYVVCILLLVNLVYTGLRKWREHLKQKGSNEILTNTMPVSEGGEILAEVMKMEPKMRKNIKRDMDAAVESKLCGFTFVFPDDDKIGLEGKGNKYRPREDARLMYSTREDATFDAWNEKAKERRKKVTDKAEPELRRAYEKRPYFNFYDLQTDSNILEAIFYTTEGDEFFRTADPNRDMNLVADKLRSFLDTKLVVGHHQRKLLEETANVVIKDTKGTAHKMEISQHDPDFLKQNGSGKVGYPEHRGQFRQEGVAVTGDYDLEAEFGTDTDEISFGASTGILLSQVGVDVATRVGRICIGTFNMNCYFYSDWILVPGHLQDRSGNVTIQFPDQTVQTTTDALNANGVKRFYGLDVIAIRRPAILRPRTKLVKAFAIEEPVIAQMVFVDAQGVRKFTQSDWARKEENSGRWSHKISTVLGMCGCPVLDVGKNRLIGIHVATNYTKKRNEFQPFTQEVVDFINGPGTKIPYCPWVFDRPACGYSSHNALFEKPTTLADVIHMQASDGLHNINNAIEGFGSSLKGQLVSPPTESTRQRFDKLFGSGSFELIGQMNKGLIDKHVIVGENDDVYDFMREHPTFTWLKDFMNEYAPSVLSYSAYYKDLCKYNRAKHVLTYNPEELHCATKGLIKMLEDAGLTQGSVRTPQQVVSDIQWNTSAGPSYQGKKRDLCAHLSDDEVLHLAEVCRQQFLEGKSTGVWNGSLKAELRTIEKVEAEKTRVFTASPITSLFAMKFYVDDFNKKFYATNLKAPHTVGINKFGRGWEKLHDKLNRPGWLHGSGDGSRFDSSIDPFFFDVVKTIRKHFLPSEHHKAIDLIYDEILNTTICLANGMVIRKNVGNNSGQPSTVVDNTLVLMTAFLYAYIHKTGDRELALLNERFIFVCNGDDNKFAISPQFDEEFGHDFSPELVELGLTYEFDDITSDICENPYMSLTMVKTPFGVGFSLPVERIIAIMQWSKKGGVLHSYLAGISAIYESFNTPKLFKSIYAYLLWLTEEHEAEILAAMTQSSTALPIPSMLDVYRLHYGDDEIWLQAADPLTDAQKEAAHTAAADRARLDLADADRRRKVEADRVEAARVKKAADAVLKPVTLTATRMPTEDDGKLKTPSGARIPSSAADGNWSVPATKQVNAGLTLKIPLNKLKSVPKSVMEHNNSVALESELKAWTDAVRTSLGITTDEAWIDALIPFIGWCCNNGTSDKHAENQVMQIDSGKGAVTEMSLSPFIVHARMNGGLRRIMRNYSDETVLLITNNKLVAHWSMKHGASANAKYAFDFFVPRSWMNPQDIEVSKQARLAALGTGTYNTMLTSDTTNLRKTTNHRVLDSDGHPELT</sequence>
<proteinExistence type="inferred from homology"/>
<organism>
    <name type="scientific">Barley yellow mosaic virus (isolate Germany)</name>
    <name type="common">BaYMV</name>
    <dbReference type="NCBI Taxonomy" id="31728"/>
    <lineage>
        <taxon>Viruses</taxon>
        <taxon>Riboviria</taxon>
        <taxon>Orthornavirae</taxon>
        <taxon>Pisuviricota</taxon>
        <taxon>Stelpaviricetes</taxon>
        <taxon>Patatavirales</taxon>
        <taxon>Potyviridae</taxon>
        <taxon>Bymovirus</taxon>
        <taxon>Barley yellow mosaic virus</taxon>
    </lineage>
</organism>
<feature type="chain" id="PRO_0000456243" description="Genome polyprotein 1">
    <location>
        <begin position="1"/>
        <end position="2412"/>
    </location>
</feature>
<feature type="chain" id="PRO_0000040538" description="Protein P3" evidence="5">
    <location>
        <begin position="1"/>
        <end position="328"/>
    </location>
</feature>
<feature type="chain" id="PRO_0000040539" description="6 kDa protein 1" evidence="5">
    <location>
        <begin position="329"/>
        <end position="394"/>
    </location>
</feature>
<feature type="chain" id="PRO_0000040540" description="Cytoplasmic inclusion protein" evidence="5">
    <location>
        <begin position="395"/>
        <end position="1053"/>
    </location>
</feature>
<feature type="chain" id="PRO_0000040541" description="6 kDa protein 2" evidence="5">
    <location>
        <begin position="1054"/>
        <end position="1175"/>
    </location>
</feature>
<feature type="chain" id="PRO_0000040542" description="Viral genome-linked protein" evidence="5">
    <location>
        <begin position="1176"/>
        <end position="1338"/>
    </location>
</feature>
<feature type="chain" id="PRO_0000040543" description="Nuclear inclusion protein A" evidence="5">
    <location>
        <begin position="1339"/>
        <end position="1587"/>
    </location>
</feature>
<feature type="chain" id="PRO_0000040544" description="Nuclear inclusion protein B" evidence="5">
    <location>
        <begin position="1588"/>
        <end position="2115"/>
    </location>
</feature>
<feature type="chain" id="PRO_0000040545" description="Coat protein" evidence="5">
    <location>
        <begin position="2116"/>
        <end position="2412"/>
    </location>
</feature>
<feature type="domain" description="Helicase ATP-binding" evidence="7">
    <location>
        <begin position="474"/>
        <end position="632"/>
    </location>
</feature>
<feature type="domain" description="Helicase C-terminal" evidence="8">
    <location>
        <begin position="647"/>
        <end position="813"/>
    </location>
</feature>
<feature type="domain" description="Peptidase C4" evidence="9">
    <location>
        <begin position="1359"/>
        <end position="1574"/>
    </location>
</feature>
<feature type="domain" description="RdRp catalytic" evidence="6">
    <location>
        <begin position="1858"/>
        <end position="1982"/>
    </location>
</feature>
<feature type="region of interest" description="Disordered" evidence="10">
    <location>
        <begin position="1"/>
        <end position="23"/>
    </location>
</feature>
<feature type="region of interest" description="Disordered" evidence="10">
    <location>
        <begin position="2178"/>
        <end position="2202"/>
    </location>
</feature>
<feature type="active site" description="For nuclear inclusion protein A activity" evidence="9">
    <location>
        <position position="1404"/>
    </location>
</feature>
<feature type="active site" description="For nuclear inclusion protein A activity" evidence="9">
    <location>
        <position position="1440"/>
    </location>
</feature>
<feature type="active site" description="For nuclear inclusion protein A activity" evidence="9">
    <location>
        <position position="1507"/>
    </location>
</feature>
<feature type="binding site" evidence="7">
    <location>
        <begin position="487"/>
        <end position="494"/>
    </location>
    <ligand>
        <name>ATP</name>
        <dbReference type="ChEBI" id="CHEBI:30616"/>
    </ligand>
</feature>
<feature type="site" description="Cleavage" evidence="5">
    <location>
        <begin position="328"/>
        <end position="329"/>
    </location>
</feature>
<feature type="site" description="Cleavage" evidence="5">
    <location>
        <begin position="394"/>
        <end position="395"/>
    </location>
</feature>
<feature type="site" description="Cleavage" evidence="5">
    <location>
        <begin position="1053"/>
        <end position="1054"/>
    </location>
</feature>
<feature type="site" description="Cleavage" evidence="5">
    <location>
        <begin position="1175"/>
        <end position="1176"/>
    </location>
</feature>
<feature type="site" description="Cleavage" evidence="5">
    <location>
        <begin position="1338"/>
        <end position="1339"/>
    </location>
</feature>
<feature type="site" description="Cleavage" evidence="5">
    <location>
        <begin position="1587"/>
        <end position="1588"/>
    </location>
</feature>
<feature type="site" description="Cleavage" evidence="5">
    <location>
        <begin position="2115"/>
        <end position="2116"/>
    </location>
</feature>
<feature type="modified residue" description="O-(5'-phospho-RNA)-tyrosine" evidence="2">
    <location>
        <position position="1234"/>
    </location>
</feature>
<comment type="function">
    <molecule>6 kDa protein 1</molecule>
    <text evidence="3">Indispensable for virus replication.</text>
</comment>
<comment type="function">
    <molecule>6 kDa protein 2</molecule>
    <text evidence="2">Indispensable for virus replication.</text>
</comment>
<comment type="function">
    <molecule>Viral genome-linked protein</molecule>
    <text evidence="4">Mediates the cap-independent, EIF4E-dependent translation of viral genomic RNAs (By similarity). Binds to the cap-binding site of host EIF4E and thus interferes with the host EIF4E-dependent mRNA export and translation (By similarity). VPg-RNA directly binds EIF4E and is a template for transcription (By similarity). Also forms trimeric complexes with EIF4E-EIF4G, which are templates for translation (By similarity).</text>
</comment>
<comment type="function">
    <molecule>Nuclear inclusion protein A</molecule>
    <text evidence="1">Has RNA-binding and proteolytic activities.</text>
</comment>
<comment type="function">
    <molecule>Nuclear inclusion protein B</molecule>
    <text>An RNA-dependent RNA polymerase that plays an essential role in the virus replication.</text>
</comment>
<comment type="catalytic activity">
    <reaction evidence="6">
        <text>RNA(n) + a ribonucleoside 5'-triphosphate = RNA(n+1) + diphosphate</text>
        <dbReference type="Rhea" id="RHEA:21248"/>
        <dbReference type="Rhea" id="RHEA-COMP:14527"/>
        <dbReference type="Rhea" id="RHEA-COMP:17342"/>
        <dbReference type="ChEBI" id="CHEBI:33019"/>
        <dbReference type="ChEBI" id="CHEBI:61557"/>
        <dbReference type="ChEBI" id="CHEBI:140395"/>
        <dbReference type="EC" id="2.7.7.48"/>
    </reaction>
</comment>
<comment type="catalytic activity">
    <reaction evidence="1">
        <text>Hydrolyzes glutaminyl bonds, and activity is further restricted by preferences for the amino acids in P6 - P1' that vary with the species of potyvirus, e.g. Glu-Xaa-Xaa-Tyr-Xaa-Gln-|-(Ser or Gly) for the enzyme from tobacco etch virus. The natural substrate is the viral polyprotein, but other proteins and oligopeptides containing the appropriate consensus sequence are also cleaved.</text>
        <dbReference type="EC" id="3.4.22.44"/>
    </reaction>
</comment>
<comment type="subcellular location">
    <molecule>6 kDa protein 1</molecule>
    <subcellularLocation>
        <location>Host cytoplasmic vesicle</location>
    </subcellularLocation>
    <text evidence="3">Probably colocalizes with 6K2-induced vesicles associated with host chloroplasts.</text>
</comment>
<comment type="subcellular location">
    <molecule>6 kDa protein 2</molecule>
    <subcellularLocation>
        <location evidence="2">Host cytoplasmic vesicle</location>
    </subcellularLocation>
    <text evidence="2">6K-induced vesicles associate with host chloroplasts.</text>
</comment>
<comment type="subcellular location">
    <molecule>Coat protein</molecule>
    <subcellularLocation>
        <location evidence="11">Virion</location>
    </subcellularLocation>
</comment>
<comment type="PTM">
    <molecule>Viral genome-linked protein</molecule>
    <text evidence="2">VPg is uridylylated by the polymerase and is covalently attached to the 5'-end of the genomic RNA. This uridylylated form acts as a nucleotide-peptide primer for the polymerase (By similarity).</text>
</comment>
<comment type="PTM">
    <molecule>Genome polyprotein 1</molecule>
    <text evidence="11">The viral RNA1 of bymoviruses is expressed as a single polyprotein which undergoes post-translational proteolytic processing by the main proteinase NIa-pro resulting in the production of at least eight individual proteins.</text>
</comment>
<comment type="similarity">
    <text evidence="11">Belongs to the bymoviruses polyprotein 1 family.</text>
</comment>
<keyword id="KW-0067">ATP-binding</keyword>
<keyword id="KW-0167">Capsid protein</keyword>
<keyword id="KW-0191">Covalent protein-RNA linkage</keyword>
<keyword id="KW-1139">Helical capsid protein</keyword>
<keyword id="KW-0347">Helicase</keyword>
<keyword id="KW-1036">Host cytoplasmic vesicle</keyword>
<keyword id="KW-0378">Hydrolase</keyword>
<keyword id="KW-0547">Nucleotide-binding</keyword>
<keyword id="KW-0548">Nucleotidyltransferase</keyword>
<keyword id="KW-0597">Phosphoprotein</keyword>
<keyword id="KW-0696">RNA-directed RNA polymerase</keyword>
<keyword id="KW-0808">Transferase</keyword>
<keyword id="KW-0693">Viral RNA replication</keyword>
<keyword id="KW-0946">Virion</keyword>
<accession>Q04574</accession>
<protein>
    <recommendedName>
        <fullName>Genome polyprotein 1</fullName>
    </recommendedName>
    <component>
        <recommendedName>
            <fullName>Protein P3</fullName>
        </recommendedName>
    </component>
    <component>
        <recommendedName>
            <fullName>6 kDa protein 1</fullName>
            <shortName>6K1</shortName>
        </recommendedName>
    </component>
    <component>
        <recommendedName>
            <fullName>Cytoplasmic inclusion protein</fullName>
            <shortName>CI</shortName>
            <ecNumber>3.6.4.-</ecNumber>
        </recommendedName>
    </component>
    <component>
        <recommendedName>
            <fullName>6 kDa protein 2</fullName>
            <shortName>6K2</shortName>
        </recommendedName>
    </component>
    <component>
        <recommendedName>
            <fullName>Viral genome-linked protein</fullName>
        </recommendedName>
        <alternativeName>
            <fullName>VPg</fullName>
        </alternativeName>
    </component>
    <component>
        <recommendedName>
            <fullName>Nuclear inclusion protein A</fullName>
            <shortName>NI-a</shortName>
            <shortName>NIa</shortName>
            <ecNumber>3.4.22.44</ecNumber>
        </recommendedName>
        <alternativeName>
            <fullName>NIa-pro</fullName>
        </alternativeName>
    </component>
    <component>
        <recommendedName>
            <fullName>Nuclear inclusion protein B</fullName>
            <shortName>NI-b</shortName>
            <shortName>NIb</shortName>
            <ecNumber>2.7.7.48</ecNumber>
        </recommendedName>
        <alternativeName>
            <fullName>RNA-directed RNA polymerase</fullName>
        </alternativeName>
    </component>
    <component>
        <recommendedName>
            <fullName>Coat protein</fullName>
            <shortName>CP</shortName>
        </recommendedName>
    </component>
</protein>
<name>POL1_BAYMG</name>
<reference key="1">
    <citation type="journal article" date="1992" name="J. Gen. Virol.">
        <title>The complete nucleotide sequence of RNA 1 of a German isolate of barley yellow mosaic virus and its comparison with a Japanese isolate.</title>
        <authorList>
            <person name="Peerenboom E."/>
            <person name="Proels M."/>
            <person name="Schell J."/>
            <person name="Steinbiss H.-H."/>
            <person name="Davidson A.D."/>
        </authorList>
    </citation>
    <scope>NUCLEOTIDE SEQUENCE [GENOMIC RNA]</scope>
</reference>